<sequence length="601" mass="66389">MSSDSMRNIRNFSIIAHVDHGKSTLADRIIQLCGGLQAREMEAQVLDSNPIERERGITIKAQSVSLPYTAKDGQTYFLNFIDTPGHVDFSYEVSRSLAACEGALLVVDAAQGVEAQSVANCYTAVEQGLEVVPVLNKIDLPTADIERAKAEIEAVIGIDAEDAVAVSAKTGLNIDLVLEAIVHRIPPPKPRDTDKLQALIIDSWFDNYLGVVSLVRVMQGEIKPGSKIQVMSTGRTHLVDKVGVFTPKRKELVALGAGEVGWINASIKDVHGAPVGDTLTLAADPAPHALPGFQEMQPRVFAGLFPVDAEDYPDLREALDKLRLNDAALRFEPESSEAMGFGFRCGFLGMLHMEIVQERLEREYNLNLISTAPTVVYEVLKTDGTIIPMDNPSKLPPLNHVEEIREPIIRANILTPPDYVGNIITLCEEKRGSQIGINYLGSQVQISYELPMAEVVLDFFDKLKSVSRGYASLDYHFLRFDAGPFVRVDTLINGDKVDALSIIVHRSYADRRGRELCEKMKELIPRQMFDVAIQAAVGSQIISRSTVKAMRKNVLAKCYGGDVSRKKKLLEKQKEGKKRMKQVGRVEIPQEAFLAVLQMDK</sequence>
<reference key="1">
    <citation type="journal article" date="2005" name="Genome Res.">
        <title>Comparative and functional genomic analyses of the pathogenicity of phytopathogen Xanthomonas campestris pv. campestris.</title>
        <authorList>
            <person name="Qian W."/>
            <person name="Jia Y."/>
            <person name="Ren S.-X."/>
            <person name="He Y.-Q."/>
            <person name="Feng J.-X."/>
            <person name="Lu L.-F."/>
            <person name="Sun Q."/>
            <person name="Ying G."/>
            <person name="Tang D.-J."/>
            <person name="Tang H."/>
            <person name="Wu W."/>
            <person name="Hao P."/>
            <person name="Wang L."/>
            <person name="Jiang B.-L."/>
            <person name="Zeng S."/>
            <person name="Gu W.-Y."/>
            <person name="Lu G."/>
            <person name="Rong L."/>
            <person name="Tian Y."/>
            <person name="Yao Z."/>
            <person name="Fu G."/>
            <person name="Chen B."/>
            <person name="Fang R."/>
            <person name="Qiang B."/>
            <person name="Chen Z."/>
            <person name="Zhao G.-P."/>
            <person name="Tang J.-L."/>
            <person name="He C."/>
        </authorList>
    </citation>
    <scope>NUCLEOTIDE SEQUENCE [LARGE SCALE GENOMIC DNA]</scope>
    <source>
        <strain>8004</strain>
    </source>
</reference>
<proteinExistence type="inferred from homology"/>
<dbReference type="EC" id="3.6.5.n1" evidence="1"/>
<dbReference type="EMBL" id="CP000050">
    <property type="protein sequence ID" value="AAY50019.1"/>
    <property type="molecule type" value="Genomic_DNA"/>
</dbReference>
<dbReference type="SMR" id="Q4USF4"/>
<dbReference type="KEGG" id="xcb:XC_2971"/>
<dbReference type="HOGENOM" id="CLU_009995_3_3_6"/>
<dbReference type="Proteomes" id="UP000000420">
    <property type="component" value="Chromosome"/>
</dbReference>
<dbReference type="GO" id="GO:0005886">
    <property type="term" value="C:plasma membrane"/>
    <property type="evidence" value="ECO:0007669"/>
    <property type="project" value="UniProtKB-SubCell"/>
</dbReference>
<dbReference type="GO" id="GO:0005525">
    <property type="term" value="F:GTP binding"/>
    <property type="evidence" value="ECO:0007669"/>
    <property type="project" value="UniProtKB-UniRule"/>
</dbReference>
<dbReference type="GO" id="GO:0003924">
    <property type="term" value="F:GTPase activity"/>
    <property type="evidence" value="ECO:0007669"/>
    <property type="project" value="UniProtKB-UniRule"/>
</dbReference>
<dbReference type="GO" id="GO:0097216">
    <property type="term" value="F:guanosine tetraphosphate binding"/>
    <property type="evidence" value="ECO:0007669"/>
    <property type="project" value="UniProtKB-ARBA"/>
</dbReference>
<dbReference type="GO" id="GO:0043022">
    <property type="term" value="F:ribosome binding"/>
    <property type="evidence" value="ECO:0007669"/>
    <property type="project" value="UniProtKB-UniRule"/>
</dbReference>
<dbReference type="GO" id="GO:0003746">
    <property type="term" value="F:translation elongation factor activity"/>
    <property type="evidence" value="ECO:0007669"/>
    <property type="project" value="UniProtKB-UniRule"/>
</dbReference>
<dbReference type="GO" id="GO:0045727">
    <property type="term" value="P:positive regulation of translation"/>
    <property type="evidence" value="ECO:0007669"/>
    <property type="project" value="UniProtKB-UniRule"/>
</dbReference>
<dbReference type="CDD" id="cd03699">
    <property type="entry name" value="EF4_II"/>
    <property type="match status" value="1"/>
</dbReference>
<dbReference type="CDD" id="cd16260">
    <property type="entry name" value="EF4_III"/>
    <property type="match status" value="1"/>
</dbReference>
<dbReference type="CDD" id="cd01890">
    <property type="entry name" value="LepA"/>
    <property type="match status" value="1"/>
</dbReference>
<dbReference type="CDD" id="cd03709">
    <property type="entry name" value="lepA_C"/>
    <property type="match status" value="1"/>
</dbReference>
<dbReference type="FunFam" id="3.40.50.300:FF:000078">
    <property type="entry name" value="Elongation factor 4"/>
    <property type="match status" value="1"/>
</dbReference>
<dbReference type="FunFam" id="2.40.30.10:FF:000015">
    <property type="entry name" value="Translation factor GUF1, mitochondrial"/>
    <property type="match status" value="1"/>
</dbReference>
<dbReference type="FunFam" id="3.30.70.240:FF:000007">
    <property type="entry name" value="Translation factor GUF1, mitochondrial"/>
    <property type="match status" value="1"/>
</dbReference>
<dbReference type="FunFam" id="3.30.70.2570:FF:000001">
    <property type="entry name" value="Translation factor GUF1, mitochondrial"/>
    <property type="match status" value="1"/>
</dbReference>
<dbReference type="FunFam" id="3.30.70.870:FF:000004">
    <property type="entry name" value="Translation factor GUF1, mitochondrial"/>
    <property type="match status" value="1"/>
</dbReference>
<dbReference type="Gene3D" id="3.30.70.240">
    <property type="match status" value="1"/>
</dbReference>
<dbReference type="Gene3D" id="3.30.70.2570">
    <property type="entry name" value="Elongation factor 4, C-terminal domain"/>
    <property type="match status" value="1"/>
</dbReference>
<dbReference type="Gene3D" id="3.30.70.870">
    <property type="entry name" value="Elongation Factor G (Translational Gtpase), domain 3"/>
    <property type="match status" value="1"/>
</dbReference>
<dbReference type="Gene3D" id="3.40.50.300">
    <property type="entry name" value="P-loop containing nucleotide triphosphate hydrolases"/>
    <property type="match status" value="1"/>
</dbReference>
<dbReference type="Gene3D" id="2.40.30.10">
    <property type="entry name" value="Translation factors"/>
    <property type="match status" value="1"/>
</dbReference>
<dbReference type="HAMAP" id="MF_00071">
    <property type="entry name" value="LepA"/>
    <property type="match status" value="1"/>
</dbReference>
<dbReference type="InterPro" id="IPR006297">
    <property type="entry name" value="EF-4"/>
</dbReference>
<dbReference type="InterPro" id="IPR035647">
    <property type="entry name" value="EFG_III/V"/>
</dbReference>
<dbReference type="InterPro" id="IPR000640">
    <property type="entry name" value="EFG_V-like"/>
</dbReference>
<dbReference type="InterPro" id="IPR004161">
    <property type="entry name" value="EFTu-like_2"/>
</dbReference>
<dbReference type="InterPro" id="IPR031157">
    <property type="entry name" value="G_TR_CS"/>
</dbReference>
<dbReference type="InterPro" id="IPR038363">
    <property type="entry name" value="LepA_C_sf"/>
</dbReference>
<dbReference type="InterPro" id="IPR013842">
    <property type="entry name" value="LepA_CTD"/>
</dbReference>
<dbReference type="InterPro" id="IPR035654">
    <property type="entry name" value="LepA_IV"/>
</dbReference>
<dbReference type="InterPro" id="IPR027417">
    <property type="entry name" value="P-loop_NTPase"/>
</dbReference>
<dbReference type="InterPro" id="IPR005225">
    <property type="entry name" value="Small_GTP-bd"/>
</dbReference>
<dbReference type="InterPro" id="IPR000795">
    <property type="entry name" value="T_Tr_GTP-bd_dom"/>
</dbReference>
<dbReference type="NCBIfam" id="TIGR01393">
    <property type="entry name" value="lepA"/>
    <property type="match status" value="1"/>
</dbReference>
<dbReference type="NCBIfam" id="TIGR00231">
    <property type="entry name" value="small_GTP"/>
    <property type="match status" value="1"/>
</dbReference>
<dbReference type="PANTHER" id="PTHR43512:SF4">
    <property type="entry name" value="TRANSLATION FACTOR GUF1 HOMOLOG, CHLOROPLASTIC"/>
    <property type="match status" value="1"/>
</dbReference>
<dbReference type="PANTHER" id="PTHR43512">
    <property type="entry name" value="TRANSLATION FACTOR GUF1-RELATED"/>
    <property type="match status" value="1"/>
</dbReference>
<dbReference type="Pfam" id="PF00679">
    <property type="entry name" value="EFG_C"/>
    <property type="match status" value="1"/>
</dbReference>
<dbReference type="Pfam" id="PF00009">
    <property type="entry name" value="GTP_EFTU"/>
    <property type="match status" value="1"/>
</dbReference>
<dbReference type="Pfam" id="PF03144">
    <property type="entry name" value="GTP_EFTU_D2"/>
    <property type="match status" value="1"/>
</dbReference>
<dbReference type="Pfam" id="PF06421">
    <property type="entry name" value="LepA_C"/>
    <property type="match status" value="1"/>
</dbReference>
<dbReference type="PRINTS" id="PR00315">
    <property type="entry name" value="ELONGATNFCT"/>
</dbReference>
<dbReference type="SMART" id="SM00838">
    <property type="entry name" value="EFG_C"/>
    <property type="match status" value="1"/>
</dbReference>
<dbReference type="SUPFAM" id="SSF54980">
    <property type="entry name" value="EF-G C-terminal domain-like"/>
    <property type="match status" value="2"/>
</dbReference>
<dbReference type="SUPFAM" id="SSF52540">
    <property type="entry name" value="P-loop containing nucleoside triphosphate hydrolases"/>
    <property type="match status" value="1"/>
</dbReference>
<dbReference type="PROSITE" id="PS00301">
    <property type="entry name" value="G_TR_1"/>
    <property type="match status" value="1"/>
</dbReference>
<dbReference type="PROSITE" id="PS51722">
    <property type="entry name" value="G_TR_2"/>
    <property type="match status" value="1"/>
</dbReference>
<accession>Q4USF4</accession>
<name>LEPA_XANC8</name>
<protein>
    <recommendedName>
        <fullName evidence="1">Elongation factor 4</fullName>
        <shortName evidence="1">EF-4</shortName>
        <ecNumber evidence="1">3.6.5.n1</ecNumber>
    </recommendedName>
    <alternativeName>
        <fullName evidence="1">Ribosomal back-translocase LepA</fullName>
    </alternativeName>
</protein>
<keyword id="KW-0997">Cell inner membrane</keyword>
<keyword id="KW-1003">Cell membrane</keyword>
<keyword id="KW-0342">GTP-binding</keyword>
<keyword id="KW-0378">Hydrolase</keyword>
<keyword id="KW-0472">Membrane</keyword>
<keyword id="KW-0547">Nucleotide-binding</keyword>
<keyword id="KW-0648">Protein biosynthesis</keyword>
<gene>
    <name evidence="1" type="primary">lepA</name>
    <name type="ordered locus">XC_2971</name>
</gene>
<feature type="chain" id="PRO_0000224810" description="Elongation factor 4">
    <location>
        <begin position="1"/>
        <end position="601"/>
    </location>
</feature>
<feature type="domain" description="tr-type G">
    <location>
        <begin position="7"/>
        <end position="189"/>
    </location>
</feature>
<feature type="binding site" evidence="1">
    <location>
        <begin position="19"/>
        <end position="24"/>
    </location>
    <ligand>
        <name>GTP</name>
        <dbReference type="ChEBI" id="CHEBI:37565"/>
    </ligand>
</feature>
<feature type="binding site" evidence="1">
    <location>
        <begin position="136"/>
        <end position="139"/>
    </location>
    <ligand>
        <name>GTP</name>
        <dbReference type="ChEBI" id="CHEBI:37565"/>
    </ligand>
</feature>
<comment type="function">
    <text evidence="1">Required for accurate and efficient protein synthesis under certain stress conditions. May act as a fidelity factor of the translation reaction, by catalyzing a one-codon backward translocation of tRNAs on improperly translocated ribosomes. Back-translocation proceeds from a post-translocation (POST) complex to a pre-translocation (PRE) complex, thus giving elongation factor G a second chance to translocate the tRNAs correctly. Binds to ribosomes in a GTP-dependent manner.</text>
</comment>
<comment type="catalytic activity">
    <reaction evidence="1">
        <text>GTP + H2O = GDP + phosphate + H(+)</text>
        <dbReference type="Rhea" id="RHEA:19669"/>
        <dbReference type="ChEBI" id="CHEBI:15377"/>
        <dbReference type="ChEBI" id="CHEBI:15378"/>
        <dbReference type="ChEBI" id="CHEBI:37565"/>
        <dbReference type="ChEBI" id="CHEBI:43474"/>
        <dbReference type="ChEBI" id="CHEBI:58189"/>
        <dbReference type="EC" id="3.6.5.n1"/>
    </reaction>
</comment>
<comment type="subcellular location">
    <subcellularLocation>
        <location evidence="1">Cell inner membrane</location>
        <topology evidence="1">Peripheral membrane protein</topology>
        <orientation evidence="1">Cytoplasmic side</orientation>
    </subcellularLocation>
</comment>
<comment type="similarity">
    <text evidence="1">Belongs to the TRAFAC class translation factor GTPase superfamily. Classic translation factor GTPase family. LepA subfamily.</text>
</comment>
<organism>
    <name type="scientific">Xanthomonas campestris pv. campestris (strain 8004)</name>
    <dbReference type="NCBI Taxonomy" id="314565"/>
    <lineage>
        <taxon>Bacteria</taxon>
        <taxon>Pseudomonadati</taxon>
        <taxon>Pseudomonadota</taxon>
        <taxon>Gammaproteobacteria</taxon>
        <taxon>Lysobacterales</taxon>
        <taxon>Lysobacteraceae</taxon>
        <taxon>Xanthomonas</taxon>
    </lineage>
</organism>
<evidence type="ECO:0000255" key="1">
    <source>
        <dbReference type="HAMAP-Rule" id="MF_00071"/>
    </source>
</evidence>